<evidence type="ECO:0000250" key="1">
    <source>
        <dbReference type="UniProtKB" id="O34714"/>
    </source>
</evidence>
<evidence type="ECO:0000255" key="2"/>
<evidence type="ECO:0000255" key="3">
    <source>
        <dbReference type="PROSITE-ProRule" id="PRU00498"/>
    </source>
</evidence>
<evidence type="ECO:0000269" key="4">
    <source>
    </source>
</evidence>
<evidence type="ECO:0000269" key="5">
    <source>
    </source>
</evidence>
<evidence type="ECO:0000305" key="6"/>
<reference key="1">
    <citation type="journal article" date="2011" name="Genome Biol.">
        <title>Comparative and functional genomics provide insights into the pathogenicity of dermatophytic fungi.</title>
        <authorList>
            <person name="Burmester A."/>
            <person name="Shelest E."/>
            <person name="Gloeckner G."/>
            <person name="Heddergott C."/>
            <person name="Schindler S."/>
            <person name="Staib P."/>
            <person name="Heidel A."/>
            <person name="Felder M."/>
            <person name="Petzold A."/>
            <person name="Szafranski K."/>
            <person name="Feuermann M."/>
            <person name="Pedruzzi I."/>
            <person name="Priebe S."/>
            <person name="Groth M."/>
            <person name="Winkler R."/>
            <person name="Li W."/>
            <person name="Kniemeyer O."/>
            <person name="Schroeckh V."/>
            <person name="Hertweck C."/>
            <person name="Hube B."/>
            <person name="White T.C."/>
            <person name="Platzer M."/>
            <person name="Guthke R."/>
            <person name="Heitman J."/>
            <person name="Woestemeyer J."/>
            <person name="Zipfel P.F."/>
            <person name="Monod M."/>
            <person name="Brakhage A.A."/>
        </authorList>
    </citation>
    <scope>NUCLEOTIDE SEQUENCE [LARGE SCALE GENOMIC DNA]</scope>
    <scope>IDENTIFICATION BY MASS SPECTROMETRY</scope>
    <scope>SUBCELLULAR LOCATION</scope>
    <scope>INDUCTION</scope>
    <source>
        <strain>ATCC MYA-4681 / CBS 112371</strain>
    </source>
</reference>
<reference key="2">
    <citation type="journal article" date="2011" name="Proteomics">
        <title>Identification of novel secreted proteases during extracellular proteolysis by dermatophytes at acidic pH.</title>
        <authorList>
            <person name="Sriranganadane D."/>
            <person name="Waridel P."/>
            <person name="Salamin K."/>
            <person name="Feuermann M."/>
            <person name="Mignon B."/>
            <person name="Staib P."/>
            <person name="Neuhaus J.M."/>
            <person name="Quadroni M."/>
            <person name="Monod M."/>
        </authorList>
    </citation>
    <scope>IDENTIFICATION BY MASS SPECTROMETRY</scope>
    <scope>SUBCELLULAR LOCATION</scope>
</reference>
<proteinExistence type="evidence at protein level"/>
<comment type="function">
    <text evidence="1">Converts oxalate to formate and CO(2) in an O(2)-dependent reaction. Can also catalyze minor side reactions: oxalate oxidation to produce H(2)O(2), and oxalate-dependent, H(2)O(2)-independent dye oxidations.</text>
</comment>
<comment type="catalytic activity">
    <reaction evidence="1">
        <text>oxalate + H(+) = formate + CO2</text>
        <dbReference type="Rhea" id="RHEA:16509"/>
        <dbReference type="ChEBI" id="CHEBI:15378"/>
        <dbReference type="ChEBI" id="CHEBI:15740"/>
        <dbReference type="ChEBI" id="CHEBI:16526"/>
        <dbReference type="ChEBI" id="CHEBI:30623"/>
        <dbReference type="EC" id="4.1.1.2"/>
    </reaction>
</comment>
<comment type="cofactor">
    <cofactor evidence="1">
        <name>Mn(2+)</name>
        <dbReference type="ChEBI" id="CHEBI:29035"/>
    </cofactor>
    <text evidence="1">Binds 2 manganese ions per subunit.</text>
</comment>
<comment type="subcellular location">
    <subcellularLocation>
        <location evidence="4 5">Secreted</location>
    </subcellularLocation>
</comment>
<comment type="induction">
    <text evidence="4">Expression is up-regulated in presence of human keratinocytes.</text>
</comment>
<dbReference type="EC" id="4.1.1.2" evidence="1"/>
<dbReference type="EMBL" id="ABSU01000002">
    <property type="protein sequence ID" value="EFE35925.1"/>
    <property type="molecule type" value="Genomic_DNA"/>
</dbReference>
<dbReference type="RefSeq" id="XP_003016570.1">
    <property type="nucleotide sequence ID" value="XM_003016524.1"/>
</dbReference>
<dbReference type="SMR" id="D4AKL6"/>
<dbReference type="STRING" id="663331.D4AKL6"/>
<dbReference type="GeneID" id="9522052"/>
<dbReference type="KEGG" id="abe:ARB_04859"/>
<dbReference type="eggNOG" id="ENOG502RJG4">
    <property type="taxonomic scope" value="Eukaryota"/>
</dbReference>
<dbReference type="HOGENOM" id="CLU_030515_2_1_1"/>
<dbReference type="OMA" id="WVEIYKS"/>
<dbReference type="OrthoDB" id="10263073at2759"/>
<dbReference type="Proteomes" id="UP000008866">
    <property type="component" value="Unassembled WGS sequence"/>
</dbReference>
<dbReference type="GO" id="GO:0005576">
    <property type="term" value="C:extracellular region"/>
    <property type="evidence" value="ECO:0007669"/>
    <property type="project" value="UniProtKB-SubCell"/>
</dbReference>
<dbReference type="GO" id="GO:0046872">
    <property type="term" value="F:metal ion binding"/>
    <property type="evidence" value="ECO:0007669"/>
    <property type="project" value="UniProtKB-KW"/>
</dbReference>
<dbReference type="GO" id="GO:0046564">
    <property type="term" value="F:oxalate decarboxylase activity"/>
    <property type="evidence" value="ECO:0007669"/>
    <property type="project" value="UniProtKB-EC"/>
</dbReference>
<dbReference type="GO" id="GO:0033609">
    <property type="term" value="P:oxalate metabolic process"/>
    <property type="evidence" value="ECO:0007669"/>
    <property type="project" value="InterPro"/>
</dbReference>
<dbReference type="CDD" id="cd20305">
    <property type="entry name" value="cupin_OxDC_C"/>
    <property type="match status" value="1"/>
</dbReference>
<dbReference type="Gene3D" id="2.60.120.10">
    <property type="entry name" value="Jelly Rolls"/>
    <property type="match status" value="2"/>
</dbReference>
<dbReference type="InterPro" id="IPR017774">
    <property type="entry name" value="Bicupin_oxalate_deCO2ase/Oxase"/>
</dbReference>
<dbReference type="InterPro" id="IPR006045">
    <property type="entry name" value="Cupin_1"/>
</dbReference>
<dbReference type="InterPro" id="IPR051610">
    <property type="entry name" value="GPI/OXD"/>
</dbReference>
<dbReference type="InterPro" id="IPR014710">
    <property type="entry name" value="RmlC-like_jellyroll"/>
</dbReference>
<dbReference type="InterPro" id="IPR011051">
    <property type="entry name" value="RmlC_Cupin_sf"/>
</dbReference>
<dbReference type="NCBIfam" id="TIGR03404">
    <property type="entry name" value="bicupin_oxalic"/>
    <property type="match status" value="1"/>
</dbReference>
<dbReference type="PANTHER" id="PTHR35848">
    <property type="entry name" value="OXALATE-BINDING PROTEIN"/>
    <property type="match status" value="1"/>
</dbReference>
<dbReference type="PANTHER" id="PTHR35848:SF9">
    <property type="entry name" value="SLL1358 PROTEIN"/>
    <property type="match status" value="1"/>
</dbReference>
<dbReference type="Pfam" id="PF00190">
    <property type="entry name" value="Cupin_1"/>
    <property type="match status" value="2"/>
</dbReference>
<dbReference type="SMART" id="SM00835">
    <property type="entry name" value="Cupin_1"/>
    <property type="match status" value="2"/>
</dbReference>
<dbReference type="SUPFAM" id="SSF51182">
    <property type="entry name" value="RmlC-like cupins"/>
    <property type="match status" value="1"/>
</dbReference>
<keyword id="KW-0210">Decarboxylase</keyword>
<keyword id="KW-0325">Glycoprotein</keyword>
<keyword id="KW-0456">Lyase</keyword>
<keyword id="KW-0464">Manganese</keyword>
<keyword id="KW-0479">Metal-binding</keyword>
<keyword id="KW-1185">Reference proteome</keyword>
<keyword id="KW-0964">Secreted</keyword>
<keyword id="KW-0732">Signal</keyword>
<feature type="signal peptide" evidence="2">
    <location>
        <begin position="1"/>
        <end position="17"/>
    </location>
</feature>
<feature type="chain" id="PRO_0000434916" description="Probable oxalate decarboxylase ARB_04859">
    <location>
        <begin position="18"/>
        <end position="404"/>
    </location>
</feature>
<feature type="domain" description="Cupin type-1 1" evidence="2">
    <location>
        <begin position="74"/>
        <end position="215"/>
    </location>
</feature>
<feature type="domain" description="Cupin type-1 2" evidence="2">
    <location>
        <begin position="249"/>
        <end position="393"/>
    </location>
</feature>
<feature type="active site" description="Proton donor" evidence="1">
    <location>
        <position position="357"/>
    </location>
</feature>
<feature type="binding site" evidence="1">
    <location>
        <position position="117"/>
    </location>
    <ligand>
        <name>Mn(2+)</name>
        <dbReference type="ChEBI" id="CHEBI:29035"/>
        <label>1</label>
    </ligand>
</feature>
<feature type="binding site" evidence="1">
    <location>
        <position position="119"/>
    </location>
    <ligand>
        <name>Mn(2+)</name>
        <dbReference type="ChEBI" id="CHEBI:29035"/>
        <label>1</label>
    </ligand>
</feature>
<feature type="binding site" evidence="1">
    <location>
        <position position="123"/>
    </location>
    <ligand>
        <name>Mn(2+)</name>
        <dbReference type="ChEBI" id="CHEBI:29035"/>
        <label>1</label>
    </ligand>
</feature>
<feature type="binding site" evidence="1">
    <location>
        <position position="162"/>
    </location>
    <ligand>
        <name>Mn(2+)</name>
        <dbReference type="ChEBI" id="CHEBI:29035"/>
        <label>1</label>
    </ligand>
</feature>
<feature type="binding site" evidence="1">
    <location>
        <position position="296"/>
    </location>
    <ligand>
        <name>Mn(2+)</name>
        <dbReference type="ChEBI" id="CHEBI:29035"/>
        <label>2</label>
    </ligand>
</feature>
<feature type="binding site" evidence="1">
    <location>
        <position position="298"/>
    </location>
    <ligand>
        <name>Mn(2+)</name>
        <dbReference type="ChEBI" id="CHEBI:29035"/>
        <label>2</label>
    </ligand>
</feature>
<feature type="binding site" evidence="1">
    <location>
        <position position="303"/>
    </location>
    <ligand>
        <name>Mn(2+)</name>
        <dbReference type="ChEBI" id="CHEBI:29035"/>
        <label>2</label>
    </ligand>
</feature>
<feature type="binding site" evidence="1">
    <location>
        <position position="342"/>
    </location>
    <ligand>
        <name>Mn(2+)</name>
        <dbReference type="ChEBI" id="CHEBI:29035"/>
        <label>2</label>
    </ligand>
</feature>
<feature type="glycosylation site" description="N-linked (GlcNAc...) asparagine" evidence="3">
    <location>
        <position position="226"/>
    </location>
</feature>
<feature type="glycosylation site" description="N-linked (GlcNAc...) asparagine" evidence="3">
    <location>
        <position position="244"/>
    </location>
</feature>
<feature type="glycosylation site" description="N-linked (GlcNAc...) asparagine" evidence="3">
    <location>
        <position position="346"/>
    </location>
</feature>
<organism>
    <name type="scientific">Arthroderma benhamiae (strain ATCC MYA-4681 / CBS 112371)</name>
    <name type="common">Trichophyton mentagrophytes</name>
    <dbReference type="NCBI Taxonomy" id="663331"/>
    <lineage>
        <taxon>Eukaryota</taxon>
        <taxon>Fungi</taxon>
        <taxon>Dikarya</taxon>
        <taxon>Ascomycota</taxon>
        <taxon>Pezizomycotina</taxon>
        <taxon>Eurotiomycetes</taxon>
        <taxon>Eurotiomycetidae</taxon>
        <taxon>Onygenales</taxon>
        <taxon>Arthrodermataceae</taxon>
        <taxon>Trichophyton</taxon>
    </lineage>
</organism>
<protein>
    <recommendedName>
        <fullName evidence="6">Probable oxalate decarboxylase ARB_04859</fullName>
        <ecNumber evidence="1">4.1.1.2</ecNumber>
    </recommendedName>
</protein>
<sequence length="404" mass="43703">MKYSAVLVAALAAIADATIPIPKGGVPGQPIQESGKGAVFSGGTNNQLDLQNPSNIGGQPATDNGLVPNMKWSFSLSKTRMLYGGWIREQVIQDLPTSHDIAGAQVHLIKGGIRQMHWHRVAEWAYIYAGSFLISAVTEDGQFQLDKLGVGDMYYFPKGAAHSLQGLEDENEILLIFDDGDFDRVGTTFMVADWISHTPKDVLAKNFGVPPSTFDKTYNPDLALINSTISTKTVEGGNGALTGNSSYTFHISNAPEIQVPGGGGTIQVVDSKNFPVSKTIACAVVRLKPGGMRELHWHPTAEEWLYFHSGNARATVYIGGGLARTFDFTAGDAGVFPDNSGHYIENTSETEELIYLELYKADRVADVSLSQWLALTPSDIAAAAINVPIEVIEQIKKEKQYIVS</sequence>
<gene>
    <name type="ORF">ARB_04859</name>
</gene>
<accession>D4AKL6</accession>
<name>OXDD_ARTBC</name>